<gene>
    <name type="primary">bgxA</name>
</gene>
<organism>
    <name type="scientific">Dickeya chrysanthemi</name>
    <name type="common">Pectobacterium chrysanthemi</name>
    <name type="synonym">Erwinia chrysanthemi</name>
    <dbReference type="NCBI Taxonomy" id="556"/>
    <lineage>
        <taxon>Bacteria</taxon>
        <taxon>Pseudomonadati</taxon>
        <taxon>Pseudomonadota</taxon>
        <taxon>Gammaproteobacteria</taxon>
        <taxon>Enterobacterales</taxon>
        <taxon>Pectobacteriaceae</taxon>
        <taxon>Dickeya</taxon>
    </lineage>
</organism>
<name>BGLX_DICCH</name>
<sequence>MEKSATRQKALLIALPLLFSPLASAVQQAVLDTRGAPLITVNGLTFKDLNRDGKLNPYEDWRLPAAERAADLVSRMTLAEKAGVMMHGSAPTAGSVTGAGTQYDLNAAKTMIADRYVNSFITRLSGDNPAQMAEENNKLQQLAEATRLGIPLTISTDPRSSFQSLVGVSVSVGKFSKWPETLGLAAIGDEELVRRFADIVRQEYRAVGITEALSPQADLATEPRWPRIDGTFGEDPDLTKKMVRGYVTGMQNGKNGLNAQSVISIVKHWVGYGAAKDGWDSHNVYGKYAQFRQNNLQWHIDPFTGAFEAHAAGIMPTYSILRNASWHGKPIEQVGAGFNRFLLTDLLRGQYGFDGVILSDWLITNDCKGDCLTGVKPGEKPVPRGMPWGVEKLTPAERFVKAVNAGVDQFGGVTDSALLVQAVQDGKLTEARLDTSVNRILKQKFQTGLFERPYVNATQANDIVGRADWQQLADDTQARSLVLLQNNNLLPLRKGSRVWLHGIAANAAQEVGFIVVNTPEQADVALIRTHTPYEQPHKNFFFGSRHHEGSLAFRNDNPDYQAIVRASAKVPTLVTVYMERPAILTNVVDKTRAVVANFGVSDSVLLNRLMSGAAYTAKLPFELPSSMSAVRNQQPDLPYDSAKPLFPFGYGLPH</sequence>
<reference key="1">
    <citation type="journal article" date="1995" name="Mol. Gen. Genet.">
        <title>Cloning and characterization of the bgxA gene from Erwinia chrysanthemi D1 which encodes a beta-glucosidase/xylosidase enzyme.</title>
        <authorList>
            <person name="Vroemen S."/>
            <person name="Heldens J."/>
            <person name="Boyd C."/>
            <person name="Henrissat B."/>
            <person name="Keen N.T."/>
        </authorList>
    </citation>
    <scope>NUCLEOTIDE SEQUENCE [GENOMIC DNA]</scope>
    <source>
        <strain>D1</strain>
    </source>
</reference>
<evidence type="ECO:0000250" key="1"/>
<evidence type="ECO:0000255" key="2"/>
<evidence type="ECO:0000305" key="3"/>
<comment type="function">
    <text>Exhibits both beta-glucosidase and beta-xylosidase activities.</text>
</comment>
<comment type="catalytic activity">
    <reaction>
        <text>Hydrolysis of terminal, non-reducing beta-D-glucosyl residues with release of beta-D-glucose.</text>
        <dbReference type="EC" id="3.2.1.21"/>
    </reaction>
</comment>
<comment type="catalytic activity">
    <reaction>
        <text>Hydrolysis of (1-&gt;4)-beta-D-xylans, to remove successive D-xylose residues from the non-reducing termini.</text>
        <dbReference type="EC" id="3.2.1.37"/>
    </reaction>
</comment>
<comment type="subcellular location">
    <subcellularLocation>
        <location>Periplasm</location>
    </subcellularLocation>
</comment>
<comment type="similarity">
    <text evidence="3">Belongs to the glycosyl hydrolase 3 family.</text>
</comment>
<protein>
    <recommendedName>
        <fullName>Periplasmic beta-glucosidase/beta-xylosidase</fullName>
    </recommendedName>
    <domain>
        <recommendedName>
            <fullName>Beta-glucosidase</fullName>
            <ecNumber>3.2.1.21</ecNumber>
        </recommendedName>
        <alternativeName>
            <fullName>Cellobiase</fullName>
        </alternativeName>
        <alternativeName>
            <fullName>Gentiobiase</fullName>
        </alternativeName>
    </domain>
    <domain>
        <recommendedName>
            <fullName>Beta-xylosidase</fullName>
            <ecNumber>3.2.1.37</ecNumber>
        </recommendedName>
        <alternativeName>
            <fullName>1,4-beta-D-xylan xylohydrolase</fullName>
        </alternativeName>
        <alternativeName>
            <fullName>Xylan 1,4-beta-xylosidase</fullName>
        </alternativeName>
    </domain>
</protein>
<proteinExistence type="inferred from homology"/>
<accession>Q46684</accession>
<feature type="signal peptide" evidence="2">
    <location>
        <begin position="1"/>
        <end position="25"/>
    </location>
</feature>
<feature type="chain" id="PRO_0000011783" description="Periplasmic beta-glucosidase/beta-xylosidase">
    <location>
        <begin position="26"/>
        <end position="654"/>
    </location>
</feature>
<feature type="active site" evidence="1">
    <location>
        <position position="235"/>
    </location>
</feature>
<feature type="active site" evidence="1">
    <location>
        <position position="360"/>
    </location>
</feature>
<keyword id="KW-0119">Carbohydrate metabolism</keyword>
<keyword id="KW-0326">Glycosidase</keyword>
<keyword id="KW-0378">Hydrolase</keyword>
<keyword id="KW-0511">Multifunctional enzyme</keyword>
<keyword id="KW-0574">Periplasm</keyword>
<keyword id="KW-0624">Polysaccharide degradation</keyword>
<keyword id="KW-0732">Signal</keyword>
<keyword id="KW-0858">Xylan degradation</keyword>
<dbReference type="EC" id="3.2.1.21"/>
<dbReference type="EC" id="3.2.1.37"/>
<dbReference type="EMBL" id="U08606">
    <property type="protein sequence ID" value="AAA80156.1"/>
    <property type="molecule type" value="Genomic_DNA"/>
</dbReference>
<dbReference type="PIR" id="S53805">
    <property type="entry name" value="S53805"/>
</dbReference>
<dbReference type="SMR" id="Q46684"/>
<dbReference type="CAZy" id="GH3">
    <property type="family name" value="Glycoside Hydrolase Family 3"/>
</dbReference>
<dbReference type="GO" id="GO:0042597">
    <property type="term" value="C:periplasmic space"/>
    <property type="evidence" value="ECO:0007669"/>
    <property type="project" value="UniProtKB-SubCell"/>
</dbReference>
<dbReference type="GO" id="GO:0008422">
    <property type="term" value="F:beta-glucosidase activity"/>
    <property type="evidence" value="ECO:0007669"/>
    <property type="project" value="UniProtKB-EC"/>
</dbReference>
<dbReference type="GO" id="GO:0009044">
    <property type="term" value="F:xylan 1,4-beta-xylosidase activity"/>
    <property type="evidence" value="ECO:0007669"/>
    <property type="project" value="UniProtKB-EC"/>
</dbReference>
<dbReference type="GO" id="GO:0009251">
    <property type="term" value="P:glucan catabolic process"/>
    <property type="evidence" value="ECO:0007669"/>
    <property type="project" value="TreeGrafter"/>
</dbReference>
<dbReference type="GO" id="GO:0045493">
    <property type="term" value="P:xylan catabolic process"/>
    <property type="evidence" value="ECO:0007669"/>
    <property type="project" value="UniProtKB-KW"/>
</dbReference>
<dbReference type="Gene3D" id="3.40.50.1700">
    <property type="entry name" value="Glycoside hydrolase family 3 C-terminal domain"/>
    <property type="match status" value="2"/>
</dbReference>
<dbReference type="Gene3D" id="3.20.20.300">
    <property type="entry name" value="Glycoside hydrolase, family 3, N-terminal domain"/>
    <property type="match status" value="1"/>
</dbReference>
<dbReference type="InterPro" id="IPR051915">
    <property type="entry name" value="Cellulose_Degrad_GH3"/>
</dbReference>
<dbReference type="InterPro" id="IPR036881">
    <property type="entry name" value="Glyco_hydro_3_C_sf"/>
</dbReference>
<dbReference type="InterPro" id="IPR001764">
    <property type="entry name" value="Glyco_hydro_3_N"/>
</dbReference>
<dbReference type="InterPro" id="IPR036962">
    <property type="entry name" value="Glyco_hydro_3_N_sf"/>
</dbReference>
<dbReference type="InterPro" id="IPR017853">
    <property type="entry name" value="Glycoside_hydrolase_SF"/>
</dbReference>
<dbReference type="PANTHER" id="PTHR30620:SF16">
    <property type="entry name" value="LYSOSOMAL BETA GLUCOSIDASE"/>
    <property type="match status" value="1"/>
</dbReference>
<dbReference type="PANTHER" id="PTHR30620">
    <property type="entry name" value="PERIPLASMIC BETA-GLUCOSIDASE-RELATED"/>
    <property type="match status" value="1"/>
</dbReference>
<dbReference type="Pfam" id="PF00933">
    <property type="entry name" value="Glyco_hydro_3"/>
    <property type="match status" value="1"/>
</dbReference>
<dbReference type="PRINTS" id="PR00133">
    <property type="entry name" value="GLHYDRLASE3"/>
</dbReference>
<dbReference type="SUPFAM" id="SSF51445">
    <property type="entry name" value="(Trans)glycosidases"/>
    <property type="match status" value="1"/>
</dbReference>
<dbReference type="SUPFAM" id="SSF52279">
    <property type="entry name" value="Beta-D-glucan exohydrolase, C-terminal domain"/>
    <property type="match status" value="1"/>
</dbReference>
<dbReference type="PROSITE" id="PS00775">
    <property type="entry name" value="GLYCOSYL_HYDROL_F3"/>
    <property type="match status" value="1"/>
</dbReference>